<reference key="1">
    <citation type="journal article" date="2006" name="Genome Res.">
        <title>Skewed genomic variability in strains of the toxigenic bacterial pathogen, Clostridium perfringens.</title>
        <authorList>
            <person name="Myers G.S.A."/>
            <person name="Rasko D.A."/>
            <person name="Cheung J.K."/>
            <person name="Ravel J."/>
            <person name="Seshadri R."/>
            <person name="DeBoy R.T."/>
            <person name="Ren Q."/>
            <person name="Varga J."/>
            <person name="Awad M.M."/>
            <person name="Brinkac L.M."/>
            <person name="Daugherty S.C."/>
            <person name="Haft D.H."/>
            <person name="Dodson R.J."/>
            <person name="Madupu R."/>
            <person name="Nelson W.C."/>
            <person name="Rosovitz M.J."/>
            <person name="Sullivan S.A."/>
            <person name="Khouri H."/>
            <person name="Dimitrov G.I."/>
            <person name="Watkins K.L."/>
            <person name="Mulligan S."/>
            <person name="Benton J."/>
            <person name="Radune D."/>
            <person name="Fisher D.J."/>
            <person name="Atkins H.S."/>
            <person name="Hiscox T."/>
            <person name="Jost B.H."/>
            <person name="Billington S.J."/>
            <person name="Songer J.G."/>
            <person name="McClane B.A."/>
            <person name="Titball R.W."/>
            <person name="Rood J.I."/>
            <person name="Melville S.B."/>
            <person name="Paulsen I.T."/>
        </authorList>
    </citation>
    <scope>NUCLEOTIDE SEQUENCE [LARGE SCALE GENOMIC DNA]</scope>
    <source>
        <strain>ATCC 13124 / DSM 756 / JCM 1290 / NCIMB 6125 / NCTC 8237 / S 107 / Type A</strain>
    </source>
</reference>
<accession>Q0TPM0</accession>
<sequence>MARRCEICNKGVVAGVQYSHSHRQSKRTWAPNIKKVKAIVKGTPKTVHVCTRCLRSGKVQRAI</sequence>
<protein>
    <recommendedName>
        <fullName evidence="1">Large ribosomal subunit protein bL28</fullName>
    </recommendedName>
    <alternativeName>
        <fullName evidence="2">50S ribosomal protein L28</fullName>
    </alternativeName>
</protein>
<organism>
    <name type="scientific">Clostridium perfringens (strain ATCC 13124 / DSM 756 / JCM 1290 / NCIMB 6125 / NCTC 8237 / Type A)</name>
    <dbReference type="NCBI Taxonomy" id="195103"/>
    <lineage>
        <taxon>Bacteria</taxon>
        <taxon>Bacillati</taxon>
        <taxon>Bacillota</taxon>
        <taxon>Clostridia</taxon>
        <taxon>Eubacteriales</taxon>
        <taxon>Clostridiaceae</taxon>
        <taxon>Clostridium</taxon>
    </lineage>
</organism>
<comment type="similarity">
    <text evidence="1">Belongs to the bacterial ribosomal protein bL28 family.</text>
</comment>
<name>RL28_CLOP1</name>
<gene>
    <name evidence="1" type="primary">rpmB</name>
    <name type="ordered locus">CPF_1987</name>
</gene>
<keyword id="KW-0687">Ribonucleoprotein</keyword>
<keyword id="KW-0689">Ribosomal protein</keyword>
<dbReference type="EMBL" id="CP000246">
    <property type="protein sequence ID" value="ABG84694.1"/>
    <property type="molecule type" value="Genomic_DNA"/>
</dbReference>
<dbReference type="RefSeq" id="WP_003458496.1">
    <property type="nucleotide sequence ID" value="NC_008261.1"/>
</dbReference>
<dbReference type="SMR" id="Q0TPM0"/>
<dbReference type="STRING" id="195103.CPF_1987"/>
<dbReference type="PaxDb" id="195103-CPF_1987"/>
<dbReference type="GeneID" id="93001729"/>
<dbReference type="KEGG" id="cpf:CPF_1987"/>
<dbReference type="eggNOG" id="COG0227">
    <property type="taxonomic scope" value="Bacteria"/>
</dbReference>
<dbReference type="HOGENOM" id="CLU_064548_7_0_9"/>
<dbReference type="Proteomes" id="UP000001823">
    <property type="component" value="Chromosome"/>
</dbReference>
<dbReference type="GO" id="GO:1990904">
    <property type="term" value="C:ribonucleoprotein complex"/>
    <property type="evidence" value="ECO:0007669"/>
    <property type="project" value="UniProtKB-KW"/>
</dbReference>
<dbReference type="GO" id="GO:0005840">
    <property type="term" value="C:ribosome"/>
    <property type="evidence" value="ECO:0007669"/>
    <property type="project" value="UniProtKB-KW"/>
</dbReference>
<dbReference type="GO" id="GO:0003735">
    <property type="term" value="F:structural constituent of ribosome"/>
    <property type="evidence" value="ECO:0007669"/>
    <property type="project" value="InterPro"/>
</dbReference>
<dbReference type="GO" id="GO:0006412">
    <property type="term" value="P:translation"/>
    <property type="evidence" value="ECO:0007669"/>
    <property type="project" value="UniProtKB-UniRule"/>
</dbReference>
<dbReference type="Gene3D" id="2.30.170.40">
    <property type="entry name" value="Ribosomal protein L28/L24"/>
    <property type="match status" value="1"/>
</dbReference>
<dbReference type="HAMAP" id="MF_00373">
    <property type="entry name" value="Ribosomal_bL28"/>
    <property type="match status" value="1"/>
</dbReference>
<dbReference type="InterPro" id="IPR050096">
    <property type="entry name" value="Bacterial_rp_bL28"/>
</dbReference>
<dbReference type="InterPro" id="IPR026569">
    <property type="entry name" value="Ribosomal_bL28"/>
</dbReference>
<dbReference type="InterPro" id="IPR034704">
    <property type="entry name" value="Ribosomal_bL28/bL31-like_sf"/>
</dbReference>
<dbReference type="InterPro" id="IPR001383">
    <property type="entry name" value="Ribosomal_bL28_bact-type"/>
</dbReference>
<dbReference type="InterPro" id="IPR037147">
    <property type="entry name" value="Ribosomal_bL28_sf"/>
</dbReference>
<dbReference type="NCBIfam" id="TIGR00009">
    <property type="entry name" value="L28"/>
    <property type="match status" value="1"/>
</dbReference>
<dbReference type="PANTHER" id="PTHR39080">
    <property type="entry name" value="50S RIBOSOMAL PROTEIN L28"/>
    <property type="match status" value="1"/>
</dbReference>
<dbReference type="PANTHER" id="PTHR39080:SF1">
    <property type="entry name" value="LARGE RIBOSOMAL SUBUNIT PROTEIN BL28A"/>
    <property type="match status" value="1"/>
</dbReference>
<dbReference type="Pfam" id="PF00830">
    <property type="entry name" value="Ribosomal_L28"/>
    <property type="match status" value="1"/>
</dbReference>
<dbReference type="SUPFAM" id="SSF143800">
    <property type="entry name" value="L28p-like"/>
    <property type="match status" value="1"/>
</dbReference>
<evidence type="ECO:0000255" key="1">
    <source>
        <dbReference type="HAMAP-Rule" id="MF_00373"/>
    </source>
</evidence>
<evidence type="ECO:0000305" key="2"/>
<feature type="chain" id="PRO_1000007216" description="Large ribosomal subunit protein bL28">
    <location>
        <begin position="1"/>
        <end position="63"/>
    </location>
</feature>
<proteinExistence type="inferred from homology"/>